<protein>
    <recommendedName>
        <fullName evidence="1">Probable transcriptional regulatory protein STH1004</fullName>
    </recommendedName>
</protein>
<comment type="subcellular location">
    <subcellularLocation>
        <location evidence="1">Cytoplasm</location>
    </subcellularLocation>
</comment>
<comment type="similarity">
    <text evidence="1">Belongs to the TACO1 family.</text>
</comment>
<reference key="1">
    <citation type="journal article" date="2004" name="Nucleic Acids Res.">
        <title>Genome sequence of Symbiobacterium thermophilum, an uncultivable bacterium that depends on microbial commensalism.</title>
        <authorList>
            <person name="Ueda K."/>
            <person name="Yamashita A."/>
            <person name="Ishikawa J."/>
            <person name="Shimada M."/>
            <person name="Watsuji T."/>
            <person name="Morimura K."/>
            <person name="Ikeda H."/>
            <person name="Hattori M."/>
            <person name="Beppu T."/>
        </authorList>
    </citation>
    <scope>NUCLEOTIDE SEQUENCE [LARGE SCALE GENOMIC DNA]</scope>
    <source>
        <strain>DSM 24528 / JCM 14929 / IAM 14863 / T</strain>
    </source>
</reference>
<accession>Q67QQ4</accession>
<proteinExistence type="inferred from homology"/>
<gene>
    <name type="ordered locus">STH1004</name>
</gene>
<organism>
    <name type="scientific">Symbiobacterium thermophilum (strain DSM 24528 / JCM 14929 / IAM 14863 / T)</name>
    <dbReference type="NCBI Taxonomy" id="292459"/>
    <lineage>
        <taxon>Bacteria</taxon>
        <taxon>Bacillati</taxon>
        <taxon>Bacillota</taxon>
        <taxon>Clostridia</taxon>
        <taxon>Eubacteriales</taxon>
        <taxon>Symbiobacteriaceae</taxon>
        <taxon>Symbiobacterium</taxon>
    </lineage>
</organism>
<dbReference type="EMBL" id="AP006840">
    <property type="protein sequence ID" value="BAD39989.1"/>
    <property type="molecule type" value="Genomic_DNA"/>
</dbReference>
<dbReference type="RefSeq" id="WP_011195136.1">
    <property type="nucleotide sequence ID" value="NC_006177.1"/>
</dbReference>
<dbReference type="SMR" id="Q67QQ4"/>
<dbReference type="STRING" id="292459.STH1004"/>
<dbReference type="KEGG" id="sth:STH1004"/>
<dbReference type="eggNOG" id="COG0217">
    <property type="taxonomic scope" value="Bacteria"/>
</dbReference>
<dbReference type="HOGENOM" id="CLU_062974_2_2_9"/>
<dbReference type="OrthoDB" id="9781053at2"/>
<dbReference type="Proteomes" id="UP000000417">
    <property type="component" value="Chromosome"/>
</dbReference>
<dbReference type="GO" id="GO:0005829">
    <property type="term" value="C:cytosol"/>
    <property type="evidence" value="ECO:0007669"/>
    <property type="project" value="TreeGrafter"/>
</dbReference>
<dbReference type="GO" id="GO:0003677">
    <property type="term" value="F:DNA binding"/>
    <property type="evidence" value="ECO:0007669"/>
    <property type="project" value="UniProtKB-UniRule"/>
</dbReference>
<dbReference type="GO" id="GO:0006355">
    <property type="term" value="P:regulation of DNA-templated transcription"/>
    <property type="evidence" value="ECO:0007669"/>
    <property type="project" value="UniProtKB-UniRule"/>
</dbReference>
<dbReference type="FunFam" id="1.10.10.200:FF:000002">
    <property type="entry name" value="Probable transcriptional regulatory protein CLM62_37755"/>
    <property type="match status" value="1"/>
</dbReference>
<dbReference type="FunFam" id="3.30.70.980:FF:000002">
    <property type="entry name" value="Probable transcriptional regulatory protein YebC"/>
    <property type="match status" value="1"/>
</dbReference>
<dbReference type="Gene3D" id="1.10.10.200">
    <property type="match status" value="1"/>
</dbReference>
<dbReference type="Gene3D" id="3.30.70.980">
    <property type="match status" value="2"/>
</dbReference>
<dbReference type="HAMAP" id="MF_00693">
    <property type="entry name" value="Transcrip_reg_TACO1"/>
    <property type="match status" value="1"/>
</dbReference>
<dbReference type="InterPro" id="IPR017856">
    <property type="entry name" value="Integrase-like_N"/>
</dbReference>
<dbReference type="InterPro" id="IPR048300">
    <property type="entry name" value="TACO1_YebC-like_2nd/3rd_dom"/>
</dbReference>
<dbReference type="InterPro" id="IPR049083">
    <property type="entry name" value="TACO1_YebC_N"/>
</dbReference>
<dbReference type="InterPro" id="IPR002876">
    <property type="entry name" value="Transcrip_reg_TACO1-like"/>
</dbReference>
<dbReference type="InterPro" id="IPR026564">
    <property type="entry name" value="Transcrip_reg_TACO1-like_dom3"/>
</dbReference>
<dbReference type="InterPro" id="IPR029072">
    <property type="entry name" value="YebC-like"/>
</dbReference>
<dbReference type="NCBIfam" id="NF001030">
    <property type="entry name" value="PRK00110.1"/>
    <property type="match status" value="1"/>
</dbReference>
<dbReference type="NCBIfam" id="NF009044">
    <property type="entry name" value="PRK12378.1"/>
    <property type="match status" value="1"/>
</dbReference>
<dbReference type="NCBIfam" id="TIGR01033">
    <property type="entry name" value="YebC/PmpR family DNA-binding transcriptional regulator"/>
    <property type="match status" value="1"/>
</dbReference>
<dbReference type="PANTHER" id="PTHR12532:SF6">
    <property type="entry name" value="TRANSCRIPTIONAL REGULATORY PROTEIN YEBC-RELATED"/>
    <property type="match status" value="1"/>
</dbReference>
<dbReference type="PANTHER" id="PTHR12532">
    <property type="entry name" value="TRANSLATIONAL ACTIVATOR OF CYTOCHROME C OXIDASE 1"/>
    <property type="match status" value="1"/>
</dbReference>
<dbReference type="Pfam" id="PF20772">
    <property type="entry name" value="TACO1_YebC_N"/>
    <property type="match status" value="1"/>
</dbReference>
<dbReference type="Pfam" id="PF01709">
    <property type="entry name" value="Transcrip_reg"/>
    <property type="match status" value="1"/>
</dbReference>
<dbReference type="SUPFAM" id="SSF75625">
    <property type="entry name" value="YebC-like"/>
    <property type="match status" value="1"/>
</dbReference>
<name>Y1004_SYMTH</name>
<keyword id="KW-0963">Cytoplasm</keyword>
<keyword id="KW-0238">DNA-binding</keyword>
<keyword id="KW-1185">Reference proteome</keyword>
<keyword id="KW-0804">Transcription</keyword>
<keyword id="KW-0805">Transcription regulation</keyword>
<sequence>MGRKWENIKRSKAKLDQQRGATFSRITKDIMKAAREGGPDPETNFLLKVAVAAARKANMPNENIQRAIARGAGLDSAERFDEIVYEGYGPGGVAIMMNIVTDNRNRTAADVRHIFSKHGGSLGETGCVSWMFKKRGVIEIDRGETPIGEDDLMMIALDAGAEDLVTEEDSYAIYTAPDALNQVMKQLEAAGVPVEKGEVAMVPTTTVAVSGEEAEQLMRLLDLLEEHDDVQNVYTNADISEA</sequence>
<evidence type="ECO:0000255" key="1">
    <source>
        <dbReference type="HAMAP-Rule" id="MF_00693"/>
    </source>
</evidence>
<feature type="chain" id="PRO_0000175912" description="Probable transcriptional regulatory protein STH1004">
    <location>
        <begin position="1"/>
        <end position="242"/>
    </location>
</feature>